<feature type="chain" id="PRO_1000142145" description="Large ribosomal subunit protein uL4">
    <location>
        <begin position="1"/>
        <end position="207"/>
    </location>
</feature>
<feature type="region of interest" description="Disordered" evidence="2">
    <location>
        <begin position="48"/>
        <end position="75"/>
    </location>
</feature>
<accession>B1MW13</accession>
<reference key="1">
    <citation type="journal article" date="2008" name="J. Bacteriol.">
        <title>Complete genome sequence of Leuconostoc citreum KM20.</title>
        <authorList>
            <person name="Kim J.F."/>
            <person name="Jeong H."/>
            <person name="Lee J.-S."/>
            <person name="Choi S.-H."/>
            <person name="Ha M."/>
            <person name="Hur C.-G."/>
            <person name="Kim J.-S."/>
            <person name="Lee S."/>
            <person name="Park H.-S."/>
            <person name="Park Y.-H."/>
            <person name="Oh T.K."/>
        </authorList>
    </citation>
    <scope>NUCLEOTIDE SEQUENCE [LARGE SCALE GENOMIC DNA]</scope>
    <source>
        <strain>KM20</strain>
    </source>
</reference>
<organism>
    <name type="scientific">Leuconostoc citreum (strain KM20)</name>
    <dbReference type="NCBI Taxonomy" id="349519"/>
    <lineage>
        <taxon>Bacteria</taxon>
        <taxon>Bacillati</taxon>
        <taxon>Bacillota</taxon>
        <taxon>Bacilli</taxon>
        <taxon>Lactobacillales</taxon>
        <taxon>Lactobacillaceae</taxon>
        <taxon>Leuconostoc</taxon>
    </lineage>
</organism>
<evidence type="ECO:0000255" key="1">
    <source>
        <dbReference type="HAMAP-Rule" id="MF_01328"/>
    </source>
</evidence>
<evidence type="ECO:0000256" key="2">
    <source>
        <dbReference type="SAM" id="MobiDB-lite"/>
    </source>
</evidence>
<evidence type="ECO:0000305" key="3"/>
<sequence>MTKVAVLKQDGSQAAELELNDAVFAIEPNNAVITDAVLMQRASMRQGTHAVKNRSAVSGGGRKPWKQKGTGRARAGSIREPQFRGGGIVFGPTPRSYAYRINRKAYQLALKSVLSQKVAEGKLVVVDALSFEAPKTQDFKKVLANLSVDTKTLVVVDEDNENAILSARNLTNVQVMTTKGINVLDVVNADKLVIVQSSIEEIQGGLA</sequence>
<proteinExistence type="inferred from homology"/>
<comment type="function">
    <text evidence="1">One of the primary rRNA binding proteins, this protein initially binds near the 5'-end of the 23S rRNA. It is important during the early stages of 50S assembly. It makes multiple contacts with different domains of the 23S rRNA in the assembled 50S subunit and ribosome.</text>
</comment>
<comment type="function">
    <text evidence="1">Forms part of the polypeptide exit tunnel.</text>
</comment>
<comment type="subunit">
    <text evidence="1">Part of the 50S ribosomal subunit.</text>
</comment>
<comment type="similarity">
    <text evidence="1">Belongs to the universal ribosomal protein uL4 family.</text>
</comment>
<name>RL4_LEUCK</name>
<dbReference type="EMBL" id="DQ489736">
    <property type="protein sequence ID" value="ACA83417.1"/>
    <property type="molecule type" value="Genomic_DNA"/>
</dbReference>
<dbReference type="RefSeq" id="WP_004899463.1">
    <property type="nucleotide sequence ID" value="NC_010471.1"/>
</dbReference>
<dbReference type="SMR" id="B1MW13"/>
<dbReference type="STRING" id="349519.LCK_01594"/>
<dbReference type="GeneID" id="61103242"/>
<dbReference type="KEGG" id="lci:LCK_01594"/>
<dbReference type="eggNOG" id="COG0088">
    <property type="taxonomic scope" value="Bacteria"/>
</dbReference>
<dbReference type="HOGENOM" id="CLU_041575_5_2_9"/>
<dbReference type="OrthoDB" id="9803201at2"/>
<dbReference type="Proteomes" id="UP000002166">
    <property type="component" value="Chromosome"/>
</dbReference>
<dbReference type="GO" id="GO:1990904">
    <property type="term" value="C:ribonucleoprotein complex"/>
    <property type="evidence" value="ECO:0007669"/>
    <property type="project" value="UniProtKB-KW"/>
</dbReference>
<dbReference type="GO" id="GO:0005840">
    <property type="term" value="C:ribosome"/>
    <property type="evidence" value="ECO:0007669"/>
    <property type="project" value="UniProtKB-KW"/>
</dbReference>
<dbReference type="GO" id="GO:0019843">
    <property type="term" value="F:rRNA binding"/>
    <property type="evidence" value="ECO:0007669"/>
    <property type="project" value="UniProtKB-UniRule"/>
</dbReference>
<dbReference type="GO" id="GO:0003735">
    <property type="term" value="F:structural constituent of ribosome"/>
    <property type="evidence" value="ECO:0007669"/>
    <property type="project" value="InterPro"/>
</dbReference>
<dbReference type="GO" id="GO:0006412">
    <property type="term" value="P:translation"/>
    <property type="evidence" value="ECO:0007669"/>
    <property type="project" value="UniProtKB-UniRule"/>
</dbReference>
<dbReference type="Gene3D" id="3.40.1370.10">
    <property type="match status" value="1"/>
</dbReference>
<dbReference type="HAMAP" id="MF_01328_B">
    <property type="entry name" value="Ribosomal_uL4_B"/>
    <property type="match status" value="1"/>
</dbReference>
<dbReference type="InterPro" id="IPR002136">
    <property type="entry name" value="Ribosomal_uL4"/>
</dbReference>
<dbReference type="InterPro" id="IPR013005">
    <property type="entry name" value="Ribosomal_uL4-like"/>
</dbReference>
<dbReference type="InterPro" id="IPR023574">
    <property type="entry name" value="Ribosomal_uL4_dom_sf"/>
</dbReference>
<dbReference type="NCBIfam" id="TIGR03953">
    <property type="entry name" value="rplD_bact"/>
    <property type="match status" value="1"/>
</dbReference>
<dbReference type="PANTHER" id="PTHR10746">
    <property type="entry name" value="50S RIBOSOMAL PROTEIN L4"/>
    <property type="match status" value="1"/>
</dbReference>
<dbReference type="PANTHER" id="PTHR10746:SF6">
    <property type="entry name" value="LARGE RIBOSOMAL SUBUNIT PROTEIN UL4M"/>
    <property type="match status" value="1"/>
</dbReference>
<dbReference type="Pfam" id="PF00573">
    <property type="entry name" value="Ribosomal_L4"/>
    <property type="match status" value="1"/>
</dbReference>
<dbReference type="SUPFAM" id="SSF52166">
    <property type="entry name" value="Ribosomal protein L4"/>
    <property type="match status" value="1"/>
</dbReference>
<gene>
    <name evidence="1" type="primary">rplD</name>
    <name type="ordered locus">LCK_01594</name>
</gene>
<keyword id="KW-1185">Reference proteome</keyword>
<keyword id="KW-0687">Ribonucleoprotein</keyword>
<keyword id="KW-0689">Ribosomal protein</keyword>
<keyword id="KW-0694">RNA-binding</keyword>
<keyword id="KW-0699">rRNA-binding</keyword>
<protein>
    <recommendedName>
        <fullName evidence="1">Large ribosomal subunit protein uL4</fullName>
    </recommendedName>
    <alternativeName>
        <fullName evidence="3">50S ribosomal protein L4</fullName>
    </alternativeName>
</protein>